<keyword id="KW-0067">ATP-binding</keyword>
<keyword id="KW-1003">Cell membrane</keyword>
<keyword id="KW-1015">Disulfide bond</keyword>
<keyword id="KW-0245">EGF-like domain</keyword>
<keyword id="KW-0325">Glycoprotein</keyword>
<keyword id="KW-0418">Kinase</keyword>
<keyword id="KW-0430">Lectin</keyword>
<keyword id="KW-0472">Membrane</keyword>
<keyword id="KW-0547">Nucleotide-binding</keyword>
<keyword id="KW-0597">Phosphoprotein</keyword>
<keyword id="KW-0675">Receptor</keyword>
<keyword id="KW-1185">Reference proteome</keyword>
<keyword id="KW-0723">Serine/threonine-protein kinase</keyword>
<keyword id="KW-0732">Signal</keyword>
<keyword id="KW-0808">Transferase</keyword>
<keyword id="KW-0812">Transmembrane</keyword>
<keyword id="KW-1133">Transmembrane helix</keyword>
<protein>
    <recommendedName>
        <fullName>G-type lectin S-receptor-like serine/threonine-protein kinase At5g24080</fullName>
        <ecNumber>2.7.11.1</ecNumber>
    </recommendedName>
</protein>
<dbReference type="EC" id="2.7.11.1"/>
<dbReference type="EMBL" id="AB009056">
    <property type="protein sequence ID" value="BAB08731.1"/>
    <property type="molecule type" value="Genomic_DNA"/>
</dbReference>
<dbReference type="EMBL" id="CP002688">
    <property type="protein sequence ID" value="ANM69103.1"/>
    <property type="molecule type" value="Genomic_DNA"/>
</dbReference>
<dbReference type="EMBL" id="AY056241">
    <property type="status" value="NOT_ANNOTATED_CDS"/>
    <property type="molecule type" value="mRNA"/>
</dbReference>
<dbReference type="RefSeq" id="NP_001330805.1">
    <property type="nucleotide sequence ID" value="NM_001343839.1"/>
</dbReference>
<dbReference type="SMR" id="Q9FLV4"/>
<dbReference type="BioGRID" id="17748">
    <property type="interactions" value="7"/>
</dbReference>
<dbReference type="FunCoup" id="Q9FLV4">
    <property type="interactions" value="48"/>
</dbReference>
<dbReference type="IntAct" id="Q9FLV4">
    <property type="interactions" value="7"/>
</dbReference>
<dbReference type="STRING" id="3702.Q9FLV4"/>
<dbReference type="GlyGen" id="Q9FLV4">
    <property type="glycosylation" value="11 sites"/>
</dbReference>
<dbReference type="PaxDb" id="3702-AT5G24080.1"/>
<dbReference type="EnsemblPlants" id="AT5G24080.2">
    <property type="protein sequence ID" value="AT5G24080.2"/>
    <property type="gene ID" value="AT5G24080"/>
</dbReference>
<dbReference type="GeneID" id="832473"/>
<dbReference type="Gramene" id="AT5G24080.2">
    <property type="protein sequence ID" value="AT5G24080.2"/>
    <property type="gene ID" value="AT5G24080"/>
</dbReference>
<dbReference type="KEGG" id="ath:AT5G24080"/>
<dbReference type="Araport" id="AT5G24080"/>
<dbReference type="TAIR" id="AT5G24080"/>
<dbReference type="eggNOG" id="ENOG502QTC9">
    <property type="taxonomic scope" value="Eukaryota"/>
</dbReference>
<dbReference type="HOGENOM" id="CLU_000288_21_4_1"/>
<dbReference type="InParanoid" id="Q9FLV4"/>
<dbReference type="OMA" id="TAWTSNT"/>
<dbReference type="PhylomeDB" id="Q9FLV4"/>
<dbReference type="PRO" id="PR:Q9FLV4"/>
<dbReference type="Proteomes" id="UP000006548">
    <property type="component" value="Chromosome 5"/>
</dbReference>
<dbReference type="ExpressionAtlas" id="Q9FLV4">
    <property type="expression patterns" value="baseline and differential"/>
</dbReference>
<dbReference type="GO" id="GO:0005886">
    <property type="term" value="C:plasma membrane"/>
    <property type="evidence" value="ECO:0007669"/>
    <property type="project" value="UniProtKB-SubCell"/>
</dbReference>
<dbReference type="GO" id="GO:0005524">
    <property type="term" value="F:ATP binding"/>
    <property type="evidence" value="ECO:0007669"/>
    <property type="project" value="UniProtKB-KW"/>
</dbReference>
<dbReference type="GO" id="GO:0005516">
    <property type="term" value="F:calmodulin binding"/>
    <property type="evidence" value="ECO:0000250"/>
    <property type="project" value="UniProtKB"/>
</dbReference>
<dbReference type="GO" id="GO:0030246">
    <property type="term" value="F:carbohydrate binding"/>
    <property type="evidence" value="ECO:0007669"/>
    <property type="project" value="UniProtKB-KW"/>
</dbReference>
<dbReference type="GO" id="GO:0106310">
    <property type="term" value="F:protein serine kinase activity"/>
    <property type="evidence" value="ECO:0007669"/>
    <property type="project" value="RHEA"/>
</dbReference>
<dbReference type="GO" id="GO:0004674">
    <property type="term" value="F:protein serine/threonine kinase activity"/>
    <property type="evidence" value="ECO:0000250"/>
    <property type="project" value="UniProtKB"/>
</dbReference>
<dbReference type="GO" id="GO:0031625">
    <property type="term" value="F:ubiquitin protein ligase binding"/>
    <property type="evidence" value="ECO:0007669"/>
    <property type="project" value="UniProtKB-ARBA"/>
</dbReference>
<dbReference type="GO" id="GO:0048544">
    <property type="term" value="P:recognition of pollen"/>
    <property type="evidence" value="ECO:0007669"/>
    <property type="project" value="InterPro"/>
</dbReference>
<dbReference type="CDD" id="cd00028">
    <property type="entry name" value="B_lectin"/>
    <property type="match status" value="1"/>
</dbReference>
<dbReference type="FunFam" id="1.10.510.10:FF:000384">
    <property type="entry name" value="G-type lectin S-receptor-like serine/threonine-protein kinase"/>
    <property type="match status" value="1"/>
</dbReference>
<dbReference type="FunFam" id="3.30.200.20:FF:000059">
    <property type="entry name" value="S-receptor-like serine/threonine-protein kinase"/>
    <property type="match status" value="1"/>
</dbReference>
<dbReference type="FunFam" id="2.90.10.10:FF:000008">
    <property type="entry name" value="Serine/threonine-protein kinase"/>
    <property type="match status" value="1"/>
</dbReference>
<dbReference type="Gene3D" id="2.90.10.10">
    <property type="entry name" value="Bulb-type lectin domain"/>
    <property type="match status" value="1"/>
</dbReference>
<dbReference type="Gene3D" id="3.30.200.20">
    <property type="entry name" value="Phosphorylase Kinase, domain 1"/>
    <property type="match status" value="1"/>
</dbReference>
<dbReference type="Gene3D" id="1.10.510.10">
    <property type="entry name" value="Transferase(Phosphotransferase) domain 1"/>
    <property type="match status" value="1"/>
</dbReference>
<dbReference type="InterPro" id="IPR001480">
    <property type="entry name" value="Bulb-type_lectin_dom"/>
</dbReference>
<dbReference type="InterPro" id="IPR036426">
    <property type="entry name" value="Bulb-type_lectin_dom_sf"/>
</dbReference>
<dbReference type="InterPro" id="IPR011009">
    <property type="entry name" value="Kinase-like_dom_sf"/>
</dbReference>
<dbReference type="InterPro" id="IPR000719">
    <property type="entry name" value="Prot_kinase_dom"/>
</dbReference>
<dbReference type="InterPro" id="IPR017441">
    <property type="entry name" value="Protein_kinase_ATP_BS"/>
</dbReference>
<dbReference type="InterPro" id="IPR000858">
    <property type="entry name" value="S_locus_glycoprot_dom"/>
</dbReference>
<dbReference type="InterPro" id="IPR008271">
    <property type="entry name" value="Ser/Thr_kinase_AS"/>
</dbReference>
<dbReference type="InterPro" id="IPR024171">
    <property type="entry name" value="SRK-like_kinase"/>
</dbReference>
<dbReference type="PANTHER" id="PTHR47974">
    <property type="entry name" value="OS07G0415500 PROTEIN"/>
    <property type="match status" value="1"/>
</dbReference>
<dbReference type="PANTHER" id="PTHR47974:SF29">
    <property type="entry name" value="RECEPTOR-LIKE SERINE_THREONINE-PROTEIN KINASE"/>
    <property type="match status" value="1"/>
</dbReference>
<dbReference type="Pfam" id="PF01453">
    <property type="entry name" value="B_lectin"/>
    <property type="match status" value="1"/>
</dbReference>
<dbReference type="Pfam" id="PF00069">
    <property type="entry name" value="Pkinase"/>
    <property type="match status" value="1"/>
</dbReference>
<dbReference type="Pfam" id="PF00954">
    <property type="entry name" value="S_locus_glycop"/>
    <property type="match status" value="1"/>
</dbReference>
<dbReference type="PIRSF" id="PIRSF000641">
    <property type="entry name" value="SRK"/>
    <property type="match status" value="1"/>
</dbReference>
<dbReference type="SMART" id="SM00108">
    <property type="entry name" value="B_lectin"/>
    <property type="match status" value="1"/>
</dbReference>
<dbReference type="SMART" id="SM00220">
    <property type="entry name" value="S_TKc"/>
    <property type="match status" value="1"/>
</dbReference>
<dbReference type="SUPFAM" id="SSF51110">
    <property type="entry name" value="alpha-D-mannose-specific plant lectins"/>
    <property type="match status" value="1"/>
</dbReference>
<dbReference type="SUPFAM" id="SSF56112">
    <property type="entry name" value="Protein kinase-like (PK-like)"/>
    <property type="match status" value="1"/>
</dbReference>
<dbReference type="PROSITE" id="PS50927">
    <property type="entry name" value="BULB_LECTIN"/>
    <property type="match status" value="1"/>
</dbReference>
<dbReference type="PROSITE" id="PS00107">
    <property type="entry name" value="PROTEIN_KINASE_ATP"/>
    <property type="match status" value="1"/>
</dbReference>
<dbReference type="PROSITE" id="PS50011">
    <property type="entry name" value="PROTEIN_KINASE_DOM"/>
    <property type="match status" value="1"/>
</dbReference>
<dbReference type="PROSITE" id="PS00108">
    <property type="entry name" value="PROTEIN_KINASE_ST"/>
    <property type="match status" value="1"/>
</dbReference>
<accession>Q9FLV4</accession>
<accession>F4KFQ0</accession>
<reference key="1">
    <citation type="journal article" date="1998" name="DNA Res.">
        <title>Structural analysis of Arabidopsis thaliana chromosome 5. IV. Sequence features of the regions of 1,456,315 bp covered by nineteen physically assigned P1 and TAC clones.</title>
        <authorList>
            <person name="Sato S."/>
            <person name="Kaneko T."/>
            <person name="Kotani H."/>
            <person name="Nakamura Y."/>
            <person name="Asamizu E."/>
            <person name="Miyajima N."/>
            <person name="Tabata S."/>
        </authorList>
    </citation>
    <scope>NUCLEOTIDE SEQUENCE [LARGE SCALE GENOMIC DNA]</scope>
    <source>
        <strain>cv. Columbia</strain>
    </source>
</reference>
<reference key="2">
    <citation type="journal article" date="2017" name="Plant J.">
        <title>Araport11: a complete reannotation of the Arabidopsis thaliana reference genome.</title>
        <authorList>
            <person name="Cheng C.Y."/>
            <person name="Krishnakumar V."/>
            <person name="Chan A.P."/>
            <person name="Thibaud-Nissen F."/>
            <person name="Schobel S."/>
            <person name="Town C.D."/>
        </authorList>
    </citation>
    <scope>GENOME REANNOTATION</scope>
    <source>
        <strain>cv. Columbia</strain>
    </source>
</reference>
<reference key="3">
    <citation type="journal article" date="2003" name="Science">
        <title>Empirical analysis of transcriptional activity in the Arabidopsis genome.</title>
        <authorList>
            <person name="Yamada K."/>
            <person name="Lim J."/>
            <person name="Dale J.M."/>
            <person name="Chen H."/>
            <person name="Shinn P."/>
            <person name="Palm C.J."/>
            <person name="Southwick A.M."/>
            <person name="Wu H.C."/>
            <person name="Kim C.J."/>
            <person name="Nguyen M."/>
            <person name="Pham P.K."/>
            <person name="Cheuk R.F."/>
            <person name="Karlin-Newmann G."/>
            <person name="Liu S.X."/>
            <person name="Lam B."/>
            <person name="Sakano H."/>
            <person name="Wu T."/>
            <person name="Yu G."/>
            <person name="Miranda M."/>
            <person name="Quach H.L."/>
            <person name="Tripp M."/>
            <person name="Chang C.H."/>
            <person name="Lee J.M."/>
            <person name="Toriumi M.J."/>
            <person name="Chan M.M."/>
            <person name="Tang C.C."/>
            <person name="Onodera C.S."/>
            <person name="Deng J.M."/>
            <person name="Akiyama K."/>
            <person name="Ansari Y."/>
            <person name="Arakawa T."/>
            <person name="Banh J."/>
            <person name="Banno F."/>
            <person name="Bowser L."/>
            <person name="Brooks S.Y."/>
            <person name="Carninci P."/>
            <person name="Chao Q."/>
            <person name="Choy N."/>
            <person name="Enju A."/>
            <person name="Goldsmith A.D."/>
            <person name="Gurjal M."/>
            <person name="Hansen N.F."/>
            <person name="Hayashizaki Y."/>
            <person name="Johnson-Hopson C."/>
            <person name="Hsuan V.W."/>
            <person name="Iida K."/>
            <person name="Karnes M."/>
            <person name="Khan S."/>
            <person name="Koesema E."/>
            <person name="Ishida J."/>
            <person name="Jiang P.X."/>
            <person name="Jones T."/>
            <person name="Kawai J."/>
            <person name="Kamiya A."/>
            <person name="Meyers C."/>
            <person name="Nakajima M."/>
            <person name="Narusaka M."/>
            <person name="Seki M."/>
            <person name="Sakurai T."/>
            <person name="Satou M."/>
            <person name="Tamse R."/>
            <person name="Vaysberg M."/>
            <person name="Wallender E.K."/>
            <person name="Wong C."/>
            <person name="Yamamura Y."/>
            <person name="Yuan S."/>
            <person name="Shinozaki K."/>
            <person name="Davis R.W."/>
            <person name="Theologis A."/>
            <person name="Ecker J.R."/>
        </authorList>
    </citation>
    <scope>NUCLEOTIDE SEQUENCE [LARGE SCALE MRNA] OF 367-872</scope>
    <source>
        <strain>cv. Columbia</strain>
    </source>
</reference>
<gene>
    <name type="ordered locus">At5g24080</name>
    <name type="ORF">MZF18.3</name>
</gene>
<evidence type="ECO:0000250" key="1"/>
<evidence type="ECO:0000250" key="2">
    <source>
        <dbReference type="UniProtKB" id="O48814"/>
    </source>
</evidence>
<evidence type="ECO:0000255" key="3"/>
<evidence type="ECO:0000255" key="4">
    <source>
        <dbReference type="PROSITE-ProRule" id="PRU00038"/>
    </source>
</evidence>
<evidence type="ECO:0000255" key="5">
    <source>
        <dbReference type="PROSITE-ProRule" id="PRU00159"/>
    </source>
</evidence>
<evidence type="ECO:0000255" key="6">
    <source>
        <dbReference type="PROSITE-ProRule" id="PRU10027"/>
    </source>
</evidence>
<evidence type="ECO:0000305" key="7"/>
<proteinExistence type="evidence at transcript level"/>
<sequence length="872" mass="97311">MSSFHFYFPSVGLFSFFCFFLVSLATEPHIGLGSKLKASEPNRAWVSANGTFAIGFTRFKPTDRFLLSIWFAQLPGDPTIVWSPNRNSPVTKEAVLELEATGNLVLSDQNTVVWTSNTSNHGVESAVMSESGNFLLLGTEVTAGPTIWQSFSQPSDTLLPNQPLTVSLELTSNPSPSRHGHYSLKMLQQHTSLSLGLTYNINLDPHANYSYWSGPDISNVTGDVTAVLDDTGSFKIVYGESSIGAVYVYKNPVDDNRNYNNSSNLGLTKNPVLRRLVLENNGNLRLYRWDNDMNGSSQWVPEWAAVSNPCDIAGICGNGVCNLDRTKKNADCLCLPGSVKLPDQENAKLCSDNSSLVQECESNINRNGSFKISTVQETNYYFSERSVIENISDISNVRKCGEMCLSDCKCVASVYGLDDEKPYCWILKSLNFGGFRDPGSTLFVKTRANESYPSNSNNNDSKSRKSHGLRQKVLVIPIVVGMLVLVALLGMLLYYNLDRKRTLKRAAKNSLILCDSPVSFTYRDLQNCTNNFSQLLGSGGFGTVYKGTVAGETLVAVKRLDRALSHGEREFITEVNTIGSMHHMNLVRLCGYCSEDSHRLLVYEYMINGSLDKWIFSSEQTANLLDWRTRFEIAVATAQGIAYFHEQCRNRIIHCDIKPENILLDDNFCPKVSDFGLAKMMGREHSHVVTMIRGTRGYLAPEWVSNRPITVKADVYSYGMLLLEIVGGRRNLDMSYDAEDFFYPGWAYKELTNGTSLKAVDKRLQGVAEEEEVVKALKVAFWCIQDEVSMRPSMGEVVKLLEGTSDEINLPPMPQTILELIEEGLEDVYRAMRREFNNQLSSLTVNTITTSQSYRSSSRSHATCSYSSMSPR</sequence>
<organism>
    <name type="scientific">Arabidopsis thaliana</name>
    <name type="common">Mouse-ear cress</name>
    <dbReference type="NCBI Taxonomy" id="3702"/>
    <lineage>
        <taxon>Eukaryota</taxon>
        <taxon>Viridiplantae</taxon>
        <taxon>Streptophyta</taxon>
        <taxon>Embryophyta</taxon>
        <taxon>Tracheophyta</taxon>
        <taxon>Spermatophyta</taxon>
        <taxon>Magnoliopsida</taxon>
        <taxon>eudicotyledons</taxon>
        <taxon>Gunneridae</taxon>
        <taxon>Pentapetalae</taxon>
        <taxon>rosids</taxon>
        <taxon>malvids</taxon>
        <taxon>Brassicales</taxon>
        <taxon>Brassicaceae</taxon>
        <taxon>Camelineae</taxon>
        <taxon>Arabidopsis</taxon>
    </lineage>
</organism>
<comment type="catalytic activity">
    <reaction>
        <text>L-seryl-[protein] + ATP = O-phospho-L-seryl-[protein] + ADP + H(+)</text>
        <dbReference type="Rhea" id="RHEA:17989"/>
        <dbReference type="Rhea" id="RHEA-COMP:9863"/>
        <dbReference type="Rhea" id="RHEA-COMP:11604"/>
        <dbReference type="ChEBI" id="CHEBI:15378"/>
        <dbReference type="ChEBI" id="CHEBI:29999"/>
        <dbReference type="ChEBI" id="CHEBI:30616"/>
        <dbReference type="ChEBI" id="CHEBI:83421"/>
        <dbReference type="ChEBI" id="CHEBI:456216"/>
        <dbReference type="EC" id="2.7.11.1"/>
    </reaction>
</comment>
<comment type="catalytic activity">
    <reaction>
        <text>L-threonyl-[protein] + ATP = O-phospho-L-threonyl-[protein] + ADP + H(+)</text>
        <dbReference type="Rhea" id="RHEA:46608"/>
        <dbReference type="Rhea" id="RHEA-COMP:11060"/>
        <dbReference type="Rhea" id="RHEA-COMP:11605"/>
        <dbReference type="ChEBI" id="CHEBI:15378"/>
        <dbReference type="ChEBI" id="CHEBI:30013"/>
        <dbReference type="ChEBI" id="CHEBI:30616"/>
        <dbReference type="ChEBI" id="CHEBI:61977"/>
        <dbReference type="ChEBI" id="CHEBI:456216"/>
        <dbReference type="EC" id="2.7.11.1"/>
    </reaction>
</comment>
<comment type="subcellular location">
    <subcellularLocation>
        <location evidence="1">Cell membrane</location>
        <topology evidence="1">Single-pass type I membrane protein</topology>
    </subcellularLocation>
</comment>
<comment type="similarity">
    <text evidence="5">Belongs to the protein kinase superfamily. Ser/Thr protein kinase family.</text>
</comment>
<comment type="sequence caution" evidence="7">
    <conflict type="frameshift">
        <sequence resource="EMBL" id="AY056241"/>
    </conflict>
</comment>
<name>Y5248_ARATH</name>
<feature type="signal peptide" evidence="3">
    <location>
        <begin position="1"/>
        <end position="25"/>
    </location>
</feature>
<feature type="chain" id="PRO_0000401330" description="G-type lectin S-receptor-like serine/threonine-protein kinase At5g24080">
    <location>
        <begin position="26"/>
        <end position="872"/>
    </location>
</feature>
<feature type="topological domain" description="Extracellular" evidence="3">
    <location>
        <begin position="26"/>
        <end position="472"/>
    </location>
</feature>
<feature type="transmembrane region" description="Helical" evidence="3">
    <location>
        <begin position="473"/>
        <end position="493"/>
    </location>
</feature>
<feature type="topological domain" description="Cytoplasmic" evidence="3">
    <location>
        <begin position="494"/>
        <end position="872"/>
    </location>
</feature>
<feature type="domain" description="Bulb-type lectin" evidence="4">
    <location>
        <begin position="30"/>
        <end position="149"/>
    </location>
</feature>
<feature type="domain" description="EGF-like; atypical">
    <location>
        <begin position="306"/>
        <end position="344"/>
    </location>
</feature>
<feature type="domain" description="PAN">
    <location>
        <begin position="360"/>
        <end position="447"/>
    </location>
</feature>
<feature type="domain" description="Protein kinase" evidence="5">
    <location>
        <begin position="530"/>
        <end position="810"/>
    </location>
</feature>
<feature type="region of interest" description="CaM-binding" evidence="1">
    <location>
        <begin position="619"/>
        <end position="637"/>
    </location>
</feature>
<feature type="active site" description="Proton acceptor" evidence="5 6">
    <location>
        <position position="656"/>
    </location>
</feature>
<feature type="binding site" evidence="5">
    <location>
        <begin position="536"/>
        <end position="544"/>
    </location>
    <ligand>
        <name>ATP</name>
        <dbReference type="ChEBI" id="CHEBI:30616"/>
    </ligand>
</feature>
<feature type="binding site" evidence="5">
    <location>
        <position position="558"/>
    </location>
    <ligand>
        <name>ATP</name>
        <dbReference type="ChEBI" id="CHEBI:30616"/>
    </ligand>
</feature>
<feature type="modified residue" description="Phosphothreonine" evidence="2">
    <location>
        <position position="521"/>
    </location>
</feature>
<feature type="modified residue" description="Phosphotyrosine" evidence="2">
    <location>
        <position position="603"/>
    </location>
</feature>
<feature type="modified residue" description="Phosphothreonine" evidence="2">
    <location>
        <position position="690"/>
    </location>
</feature>
<feature type="modified residue" description="Phosphothreonine" evidence="2">
    <location>
        <position position="695"/>
    </location>
</feature>
<feature type="glycosylation site" description="N-linked (GlcNAc...) asparagine" evidence="3">
    <location>
        <position position="49"/>
    </location>
</feature>
<feature type="glycosylation site" description="N-linked (GlcNAc...) asparagine" evidence="3">
    <location>
        <position position="117"/>
    </location>
</feature>
<feature type="glycosylation site" description="N-linked (GlcNAc...) asparagine" evidence="3">
    <location>
        <position position="208"/>
    </location>
</feature>
<feature type="glycosylation site" description="N-linked (GlcNAc...) asparagine" evidence="3">
    <location>
        <position position="219"/>
    </location>
</feature>
<feature type="glycosylation site" description="N-linked (GlcNAc...) asparagine" evidence="3">
    <location>
        <position position="261"/>
    </location>
</feature>
<feature type="glycosylation site" description="N-linked (GlcNAc...) asparagine" evidence="3">
    <location>
        <position position="294"/>
    </location>
</feature>
<feature type="glycosylation site" description="N-linked (GlcNAc...) asparagine" evidence="3">
    <location>
        <position position="353"/>
    </location>
</feature>
<feature type="glycosylation site" description="N-linked (GlcNAc...) asparagine" evidence="3">
    <location>
        <position position="367"/>
    </location>
</feature>
<feature type="glycosylation site" description="N-linked (GlcNAc...) asparagine" evidence="3">
    <location>
        <position position="390"/>
    </location>
</feature>
<feature type="glycosylation site" description="N-linked (GlcNAc...) asparagine" evidence="3">
    <location>
        <position position="449"/>
    </location>
</feature>
<feature type="glycosylation site" description="N-linked (GlcNAc...) asparagine" evidence="3">
    <location>
        <position position="459"/>
    </location>
</feature>
<feature type="disulfide bond" evidence="4">
    <location>
        <begin position="310"/>
        <end position="321"/>
    </location>
</feature>
<feature type="disulfide bond" evidence="4">
    <location>
        <begin position="316"/>
        <end position="332"/>
    </location>
</feature>
<feature type="disulfide bond" evidence="4">
    <location>
        <begin position="400"/>
        <end position="424"/>
    </location>
</feature>
<feature type="disulfide bond" evidence="4">
    <location>
        <begin position="404"/>
        <end position="410"/>
    </location>
</feature>